<organism>
    <name type="scientific">Dictyostelium discoideum</name>
    <name type="common">Social amoeba</name>
    <dbReference type="NCBI Taxonomy" id="44689"/>
    <lineage>
        <taxon>Eukaryota</taxon>
        <taxon>Amoebozoa</taxon>
        <taxon>Evosea</taxon>
        <taxon>Eumycetozoa</taxon>
        <taxon>Dictyostelia</taxon>
        <taxon>Dictyosteliales</taxon>
        <taxon>Dictyosteliaceae</taxon>
        <taxon>Dictyostelium</taxon>
    </lineage>
</organism>
<keyword id="KW-0175">Coiled coil</keyword>
<keyword id="KW-0344">Guanine-nucleotide releasing factor</keyword>
<keyword id="KW-1185">Reference proteome</keyword>
<reference key="1">
    <citation type="journal article" date="2005" name="Genome Biol.">
        <title>The Dictyostelium genome encodes numerous RasGEFs with multiple biological roles.</title>
        <authorList>
            <person name="Wilkins A."/>
            <person name="Szafranski K."/>
            <person name="Fraser D.J."/>
            <person name="Bakthavatsalam D."/>
            <person name="Mueller R."/>
            <person name="Fisher P.R."/>
            <person name="Gloeckner G."/>
            <person name="Eichinger L."/>
            <person name="Noegel A.A."/>
            <person name="Insall R.H."/>
        </authorList>
    </citation>
    <scope>NUCLEOTIDE SEQUENCE [GENOMIC DNA]</scope>
    <scope>DEVELOPMENTAL STAGE</scope>
    <source>
        <strain>AX4</strain>
    </source>
</reference>
<reference key="2">
    <citation type="journal article" date="2002" name="Nature">
        <title>Sequence and analysis of chromosome 2 of Dictyostelium discoideum.</title>
        <authorList>
            <person name="Gloeckner G."/>
            <person name="Eichinger L."/>
            <person name="Szafranski K."/>
            <person name="Pachebat J.A."/>
            <person name="Bankier A.T."/>
            <person name="Dear P.H."/>
            <person name="Lehmann R."/>
            <person name="Baumgart C."/>
            <person name="Parra G."/>
            <person name="Abril J.F."/>
            <person name="Guigo R."/>
            <person name="Kumpf K."/>
            <person name="Tunggal B."/>
            <person name="Cox E.C."/>
            <person name="Quail M.A."/>
            <person name="Platzer M."/>
            <person name="Rosenthal A."/>
            <person name="Noegel A.A."/>
        </authorList>
    </citation>
    <scope>NUCLEOTIDE SEQUENCE [LARGE SCALE GENOMIC DNA]</scope>
    <source>
        <strain>AX4</strain>
    </source>
</reference>
<reference key="3">
    <citation type="journal article" date="2005" name="Nature">
        <title>The genome of the social amoeba Dictyostelium discoideum.</title>
        <authorList>
            <person name="Eichinger L."/>
            <person name="Pachebat J.A."/>
            <person name="Gloeckner G."/>
            <person name="Rajandream M.A."/>
            <person name="Sucgang R."/>
            <person name="Berriman M."/>
            <person name="Song J."/>
            <person name="Olsen R."/>
            <person name="Szafranski K."/>
            <person name="Xu Q."/>
            <person name="Tunggal B."/>
            <person name="Kummerfeld S."/>
            <person name="Madera M."/>
            <person name="Konfortov B.A."/>
            <person name="Rivero F."/>
            <person name="Bankier A.T."/>
            <person name="Lehmann R."/>
            <person name="Hamlin N."/>
            <person name="Davies R."/>
            <person name="Gaudet P."/>
            <person name="Fey P."/>
            <person name="Pilcher K."/>
            <person name="Chen G."/>
            <person name="Saunders D."/>
            <person name="Sodergren E.J."/>
            <person name="Davis P."/>
            <person name="Kerhornou A."/>
            <person name="Nie X."/>
            <person name="Hall N."/>
            <person name="Anjard C."/>
            <person name="Hemphill L."/>
            <person name="Bason N."/>
            <person name="Farbrother P."/>
            <person name="Desany B."/>
            <person name="Just E."/>
            <person name="Morio T."/>
            <person name="Rost R."/>
            <person name="Churcher C.M."/>
            <person name="Cooper J."/>
            <person name="Haydock S."/>
            <person name="van Driessche N."/>
            <person name="Cronin A."/>
            <person name="Goodhead I."/>
            <person name="Muzny D.M."/>
            <person name="Mourier T."/>
            <person name="Pain A."/>
            <person name="Lu M."/>
            <person name="Harper D."/>
            <person name="Lindsay R."/>
            <person name="Hauser H."/>
            <person name="James K.D."/>
            <person name="Quiles M."/>
            <person name="Madan Babu M."/>
            <person name="Saito T."/>
            <person name="Buchrieser C."/>
            <person name="Wardroper A."/>
            <person name="Felder M."/>
            <person name="Thangavelu M."/>
            <person name="Johnson D."/>
            <person name="Knights A."/>
            <person name="Loulseged H."/>
            <person name="Mungall K.L."/>
            <person name="Oliver K."/>
            <person name="Price C."/>
            <person name="Quail M.A."/>
            <person name="Urushihara H."/>
            <person name="Hernandez J."/>
            <person name="Rabbinowitsch E."/>
            <person name="Steffen D."/>
            <person name="Sanders M."/>
            <person name="Ma J."/>
            <person name="Kohara Y."/>
            <person name="Sharp S."/>
            <person name="Simmonds M.N."/>
            <person name="Spiegler S."/>
            <person name="Tivey A."/>
            <person name="Sugano S."/>
            <person name="White B."/>
            <person name="Walker D."/>
            <person name="Woodward J.R."/>
            <person name="Winckler T."/>
            <person name="Tanaka Y."/>
            <person name="Shaulsky G."/>
            <person name="Schleicher M."/>
            <person name="Weinstock G.M."/>
            <person name="Rosenthal A."/>
            <person name="Cox E.C."/>
            <person name="Chisholm R.L."/>
            <person name="Gibbs R.A."/>
            <person name="Loomis W.F."/>
            <person name="Platzer M."/>
            <person name="Kay R.R."/>
            <person name="Williams J.G."/>
            <person name="Dear P.H."/>
            <person name="Noegel A.A."/>
            <person name="Barrell B.G."/>
            <person name="Kuspa A."/>
        </authorList>
    </citation>
    <scope>NUCLEOTIDE SEQUENCE [LARGE SCALE GENOMIC DNA]</scope>
    <source>
        <strain>AX4</strain>
    </source>
</reference>
<feature type="chain" id="PRO_0000384477" description="Ras guanine nucleotide exchange factor S">
    <location>
        <begin position="1"/>
        <end position="1043"/>
    </location>
</feature>
<feature type="domain" description="N-terminal Ras-GEF" evidence="3">
    <location>
        <begin position="645"/>
        <end position="768"/>
    </location>
</feature>
<feature type="domain" description="Ras-GEF" evidence="4">
    <location>
        <begin position="803"/>
        <end position="1043"/>
    </location>
</feature>
<feature type="region of interest" description="Disordered" evidence="5">
    <location>
        <begin position="135"/>
        <end position="160"/>
    </location>
</feature>
<feature type="region of interest" description="Disordered" evidence="5">
    <location>
        <begin position="245"/>
        <end position="316"/>
    </location>
</feature>
<feature type="coiled-coil region" evidence="2">
    <location>
        <begin position="109"/>
        <end position="142"/>
    </location>
</feature>
<feature type="coiled-coil region" evidence="2">
    <location>
        <begin position="404"/>
        <end position="434"/>
    </location>
</feature>
<feature type="compositionally biased region" description="Low complexity" evidence="5">
    <location>
        <begin position="135"/>
        <end position="145"/>
    </location>
</feature>
<feature type="compositionally biased region" description="Low complexity" evidence="5">
    <location>
        <begin position="245"/>
        <end position="258"/>
    </location>
</feature>
<feature type="compositionally biased region" description="Low complexity" evidence="5">
    <location>
        <begin position="266"/>
        <end position="281"/>
    </location>
</feature>
<feature type="compositionally biased region" description="Low complexity" evidence="5">
    <location>
        <begin position="293"/>
        <end position="307"/>
    </location>
</feature>
<comment type="function">
    <text evidence="1">Promotes the exchange of Ras-bound GDP by GTP.</text>
</comment>
<comment type="developmental stage">
    <text evidence="6">Expressed during development; especially between 12-14 hours of development.</text>
</comment>
<evidence type="ECO:0000250" key="1"/>
<evidence type="ECO:0000255" key="2"/>
<evidence type="ECO:0000255" key="3">
    <source>
        <dbReference type="PROSITE-ProRule" id="PRU00135"/>
    </source>
</evidence>
<evidence type="ECO:0000255" key="4">
    <source>
        <dbReference type="PROSITE-ProRule" id="PRU00168"/>
    </source>
</evidence>
<evidence type="ECO:0000256" key="5">
    <source>
        <dbReference type="SAM" id="MobiDB-lite"/>
    </source>
</evidence>
<evidence type="ECO:0000269" key="6">
    <source>
    </source>
</evidence>
<proteinExistence type="evidence at transcript level"/>
<name>GEFS_DICDI</name>
<protein>
    <recommendedName>
        <fullName>Ras guanine nucleotide exchange factor S</fullName>
    </recommendedName>
    <alternativeName>
        <fullName>RasGEF domain-containing protein S</fullName>
    </alternativeName>
</protein>
<accession>Q8SSW7</accession>
<accession>Q55AH0</accession>
<gene>
    <name type="primary">gefS</name>
    <name type="synonym">rasGEFS</name>
    <name type="ORF">DDB_G0271868</name>
</gene>
<sequence>MGEVSLIGITAILCQKTDGFWKNIDDSLCRLEVLKSNIDSKFRLVAISTDNRCIFNKWVRTNSEITKCSDLFLEIKQVSSQSSNVEYFGVNFAYKPEVDKFYACFSKCIETLQTQRRQSTLNIQALQINNELQQQLQQQQQLPPIDQLPPPPTSTSTSTISNANISISNSISYDSLHQMASGITLEDLPPPPPSASSLILNNNTPLDLTSLPPIDFSNLPPPPTGLMTSRSSLTEANGLEIKNKLSPLLNGGASGLSSSPPPTTESKNQLNSSSGSNNSSSAPHLTDLFLPTNNNNSSGNQSASNSSPTSQYHQSQPNLQQYGTAPLTASSKLLQQQQQQQQQQQQNIIMTTTTTTTTTINIKTGSSSDSFLKTASGRRSIRVRHSTNQAADQQKKTMGRKDGLAVSLQNVEGLQNIAENLEDETLNLLDLVNEQVVTPEISNNAHLNQSLMKIFEHLQVLFILTGQASTHPGGKLITQVVNKLGRGPQASEFFSGKSVDGGYQWYNLDEVKDSVIGIHNLLALKKNLITAIAHLSTCVRVLGLQASLEIDWMSRNKSSETEKIVVQLACLTRELISSMSRLLAATVTYCYVCSSIAFIRNQQHSASADHNQASIQNRIRSPSTIDTINIWDELKTIKTIPTVPKDGSILKVTLNQLVLMLTSETSYDSKFLKTFITTYQSFASPGVLFTKLIERFYVPEWYSTVPTKISTIQQKVIVVLKYWIENQSSDFDQDVIDQIYFFINNLANSNEGYSELSRLLRGLLDKMIQDREVKFELLFQMPPRISFEEDSILSPIELFSEWSAQSIAQQLTLIDFSIFKDLEARELLNQNFNKPKLKYKSPTIMRMISKSTQFSFWVAYVILMEPKKEKRIKIFEKFCEVGKYLLKMNNFNSLMGLNAGLNLTCVHRLKKTKKKLSSSAISILTELERIFSSKKSFKNYRDHLSTVQLPCIPYLGFNLTDITFIEEGNTDNISSTDPAAANIGPLINFKKRELLYQAWADLSRFQETPYTFQPEEPLNTFLLNFPILDDKELYDLSIALEPK</sequence>
<dbReference type="EMBL" id="AY160107">
    <property type="protein sequence ID" value="AAN46887.1"/>
    <property type="molecule type" value="Genomic_DNA"/>
</dbReference>
<dbReference type="EMBL" id="AAFI02000007">
    <property type="protein sequence ID" value="EAL71513.1"/>
    <property type="molecule type" value="Genomic_DNA"/>
</dbReference>
<dbReference type="RefSeq" id="XP_645439.1">
    <property type="nucleotide sequence ID" value="XM_640347.1"/>
</dbReference>
<dbReference type="SMR" id="Q8SSW7"/>
<dbReference type="FunCoup" id="Q8SSW7">
    <property type="interactions" value="453"/>
</dbReference>
<dbReference type="STRING" id="44689.Q8SSW7"/>
<dbReference type="PaxDb" id="44689-DDB0191324"/>
<dbReference type="EnsemblProtists" id="EAL71513">
    <property type="protein sequence ID" value="EAL71513"/>
    <property type="gene ID" value="DDB_G0271868"/>
</dbReference>
<dbReference type="GeneID" id="8618179"/>
<dbReference type="KEGG" id="ddi:DDB_G0271868"/>
<dbReference type="dictyBase" id="DDB_G0271868">
    <property type="gene designation" value="gefS"/>
</dbReference>
<dbReference type="VEuPathDB" id="AmoebaDB:DDB_G0271868"/>
<dbReference type="eggNOG" id="KOG3417">
    <property type="taxonomic scope" value="Eukaryota"/>
</dbReference>
<dbReference type="HOGENOM" id="CLU_292303_0_0_1"/>
<dbReference type="InParanoid" id="Q8SSW7"/>
<dbReference type="OMA" id="STQFSFW"/>
<dbReference type="Reactome" id="R-DDI-193648">
    <property type="pathway name" value="NRAGE signals death through JNK"/>
</dbReference>
<dbReference type="Reactome" id="R-DDI-9013148">
    <property type="pathway name" value="CDC42 GTPase cycle"/>
</dbReference>
<dbReference type="Reactome" id="R-DDI-9013149">
    <property type="pathway name" value="RAC1 GTPase cycle"/>
</dbReference>
<dbReference type="PRO" id="PR:Q8SSW7"/>
<dbReference type="Proteomes" id="UP000002195">
    <property type="component" value="Chromosome 2"/>
</dbReference>
<dbReference type="GO" id="GO:0005886">
    <property type="term" value="C:plasma membrane"/>
    <property type="evidence" value="ECO:0000318"/>
    <property type="project" value="GO_Central"/>
</dbReference>
<dbReference type="GO" id="GO:0005085">
    <property type="term" value="F:guanyl-nucleotide exchange factor activity"/>
    <property type="evidence" value="ECO:0000318"/>
    <property type="project" value="GO_Central"/>
</dbReference>
<dbReference type="GO" id="GO:0007265">
    <property type="term" value="P:Ras protein signal transduction"/>
    <property type="evidence" value="ECO:0000318"/>
    <property type="project" value="GO_Central"/>
</dbReference>
<dbReference type="CDD" id="cd00155">
    <property type="entry name" value="RasGEF"/>
    <property type="match status" value="1"/>
</dbReference>
<dbReference type="CDD" id="cd06224">
    <property type="entry name" value="REM"/>
    <property type="match status" value="1"/>
</dbReference>
<dbReference type="Gene3D" id="2.30.29.30">
    <property type="entry name" value="Pleckstrin-homology domain (PH domain)/Phosphotyrosine-binding domain (PTB)"/>
    <property type="match status" value="1"/>
</dbReference>
<dbReference type="Gene3D" id="1.10.840.10">
    <property type="entry name" value="Ras guanine-nucleotide exchange factors catalytic domain"/>
    <property type="match status" value="1"/>
</dbReference>
<dbReference type="Gene3D" id="1.20.870.10">
    <property type="entry name" value="Son of sevenless (SoS) protein Chain: S domain 1"/>
    <property type="match status" value="1"/>
</dbReference>
<dbReference type="InterPro" id="IPR011993">
    <property type="entry name" value="PH-like_dom_sf"/>
</dbReference>
<dbReference type="InterPro" id="IPR008937">
    <property type="entry name" value="Ras-like_GEF"/>
</dbReference>
<dbReference type="InterPro" id="IPR000651">
    <property type="entry name" value="Ras-like_Gua-exchang_fac_N"/>
</dbReference>
<dbReference type="InterPro" id="IPR019804">
    <property type="entry name" value="Ras_G-nucl-exch_fac_CS"/>
</dbReference>
<dbReference type="InterPro" id="IPR023578">
    <property type="entry name" value="Ras_GEF_dom_sf"/>
</dbReference>
<dbReference type="InterPro" id="IPR001895">
    <property type="entry name" value="RASGEF_cat_dom"/>
</dbReference>
<dbReference type="InterPro" id="IPR036964">
    <property type="entry name" value="RASGEF_cat_dom_sf"/>
</dbReference>
<dbReference type="PANTHER" id="PTHR23113">
    <property type="entry name" value="GUANINE NUCLEOTIDE EXCHANGE FACTOR"/>
    <property type="match status" value="1"/>
</dbReference>
<dbReference type="PANTHER" id="PTHR23113:SF151">
    <property type="entry name" value="RAS GUANINE NUCLEOTIDE EXCHANGE FACTOR S"/>
    <property type="match status" value="1"/>
</dbReference>
<dbReference type="Pfam" id="PF00617">
    <property type="entry name" value="RasGEF"/>
    <property type="match status" value="1"/>
</dbReference>
<dbReference type="Pfam" id="PF00618">
    <property type="entry name" value="RasGEF_N"/>
    <property type="match status" value="1"/>
</dbReference>
<dbReference type="SMART" id="SM00147">
    <property type="entry name" value="RasGEF"/>
    <property type="match status" value="1"/>
</dbReference>
<dbReference type="SMART" id="SM00229">
    <property type="entry name" value="RasGEFN"/>
    <property type="match status" value="1"/>
</dbReference>
<dbReference type="SUPFAM" id="SSF50729">
    <property type="entry name" value="PH domain-like"/>
    <property type="match status" value="1"/>
</dbReference>
<dbReference type="SUPFAM" id="SSF48366">
    <property type="entry name" value="Ras GEF"/>
    <property type="match status" value="1"/>
</dbReference>
<dbReference type="PROSITE" id="PS00720">
    <property type="entry name" value="RASGEF"/>
    <property type="match status" value="1"/>
</dbReference>
<dbReference type="PROSITE" id="PS50009">
    <property type="entry name" value="RASGEF_CAT"/>
    <property type="match status" value="1"/>
</dbReference>
<dbReference type="PROSITE" id="PS50212">
    <property type="entry name" value="RASGEF_NTER"/>
    <property type="match status" value="1"/>
</dbReference>